<organism>
    <name type="scientific">Caenorhabditis elegans</name>
    <dbReference type="NCBI Taxonomy" id="6239"/>
    <lineage>
        <taxon>Eukaryota</taxon>
        <taxon>Metazoa</taxon>
        <taxon>Ecdysozoa</taxon>
        <taxon>Nematoda</taxon>
        <taxon>Chromadorea</taxon>
        <taxon>Rhabditida</taxon>
        <taxon>Rhabditina</taxon>
        <taxon>Rhabditomorpha</taxon>
        <taxon>Rhabditoidea</taxon>
        <taxon>Rhabditidae</taxon>
        <taxon>Peloderinae</taxon>
        <taxon>Caenorhabditis</taxon>
    </lineage>
</organism>
<accession>P42083</accession>
<accession>Q2V4X3</accession>
<dbReference type="EC" id="3.1.3.48"/>
<dbReference type="EMBL" id="FO080148">
    <property type="protein sequence ID" value="CCD61607.1"/>
    <property type="molecule type" value="Genomic_DNA"/>
</dbReference>
<dbReference type="PIR" id="T15305">
    <property type="entry name" value="T15305"/>
</dbReference>
<dbReference type="RefSeq" id="NP_498560.2">
    <property type="nucleotide sequence ID" value="NM_066159.4"/>
</dbReference>
<dbReference type="SMR" id="P42083"/>
<dbReference type="FunCoup" id="P42083">
    <property type="interactions" value="811"/>
</dbReference>
<dbReference type="STRING" id="6239.B0280.11.1"/>
<dbReference type="PaxDb" id="6239-B0280.11"/>
<dbReference type="EnsemblMetazoa" id="B0280.11.1">
    <property type="protein sequence ID" value="B0280.11.1"/>
    <property type="gene ID" value="WBGene00015106"/>
</dbReference>
<dbReference type="GeneID" id="175997"/>
<dbReference type="KEGG" id="cel:CELE_B0280.11"/>
<dbReference type="UCSC" id="B0280.11">
    <property type="organism name" value="c. elegans"/>
</dbReference>
<dbReference type="AGR" id="WB:WBGene00015106"/>
<dbReference type="CTD" id="175997"/>
<dbReference type="WormBase" id="B0280.11">
    <property type="protein sequence ID" value="CE39312"/>
    <property type="gene ID" value="WBGene00015106"/>
</dbReference>
<dbReference type="eggNOG" id="KOG0789">
    <property type="taxonomic scope" value="Eukaryota"/>
</dbReference>
<dbReference type="GeneTree" id="ENSGT00970000195861"/>
<dbReference type="HOGENOM" id="CLU_596184_0_0_1"/>
<dbReference type="InParanoid" id="P42083"/>
<dbReference type="OMA" id="FETFACA"/>
<dbReference type="OrthoDB" id="5870053at2759"/>
<dbReference type="PhylomeDB" id="P42083"/>
<dbReference type="PRO" id="PR:P42083"/>
<dbReference type="Proteomes" id="UP000001940">
    <property type="component" value="Chromosome III"/>
</dbReference>
<dbReference type="Bgee" id="WBGene00015106">
    <property type="expression patterns" value="Expressed in adult organism and 1 other cell type or tissue"/>
</dbReference>
<dbReference type="GO" id="GO:0004725">
    <property type="term" value="F:protein tyrosine phosphatase activity"/>
    <property type="evidence" value="ECO:0007669"/>
    <property type="project" value="UniProtKB-EC"/>
</dbReference>
<dbReference type="CDD" id="cd00047">
    <property type="entry name" value="PTPc"/>
    <property type="match status" value="1"/>
</dbReference>
<dbReference type="Gene3D" id="3.90.190.10">
    <property type="entry name" value="Protein tyrosine phosphatase superfamily"/>
    <property type="match status" value="1"/>
</dbReference>
<dbReference type="InterPro" id="IPR029021">
    <property type="entry name" value="Prot-tyrosine_phosphatase-like"/>
</dbReference>
<dbReference type="InterPro" id="IPR000242">
    <property type="entry name" value="PTP_cat"/>
</dbReference>
<dbReference type="InterPro" id="IPR003595">
    <property type="entry name" value="Tyr_Pase_cat"/>
</dbReference>
<dbReference type="PANTHER" id="PTHR23219">
    <property type="entry name" value="TYROSINE-PROTEIN PHOSPHATASE C15H7.3-RELATED"/>
    <property type="match status" value="1"/>
</dbReference>
<dbReference type="PANTHER" id="PTHR23219:SF12">
    <property type="entry name" value="TYROSINE-PROTEIN PHOSPHATASE DOMAIN-CONTAINING PROTEIN-RELATED"/>
    <property type="match status" value="1"/>
</dbReference>
<dbReference type="Pfam" id="PF00102">
    <property type="entry name" value="Y_phosphatase"/>
    <property type="match status" value="1"/>
</dbReference>
<dbReference type="SMART" id="SM00194">
    <property type="entry name" value="PTPc"/>
    <property type="match status" value="1"/>
</dbReference>
<dbReference type="SMART" id="SM00404">
    <property type="entry name" value="PTPc_motif"/>
    <property type="match status" value="1"/>
</dbReference>
<dbReference type="SUPFAM" id="SSF52799">
    <property type="entry name" value="(Phosphotyrosine protein) phosphatases II"/>
    <property type="match status" value="1"/>
</dbReference>
<dbReference type="PROSITE" id="PS50055">
    <property type="entry name" value="TYR_PHOSPHATASE_PTP"/>
    <property type="match status" value="1"/>
</dbReference>
<keyword id="KW-0378">Hydrolase</keyword>
<keyword id="KW-0904">Protein phosphatase</keyword>
<keyword id="KW-1185">Reference proteome</keyword>
<protein>
    <recommendedName>
        <fullName>Putative tyrosine-protein phosphatase B0280.11</fullName>
        <ecNumber>3.1.3.48</ecNumber>
    </recommendedName>
</protein>
<gene>
    <name type="ORF">B0280.11</name>
</gene>
<reference key="1">
    <citation type="journal article" date="1998" name="Science">
        <title>Genome sequence of the nematode C. elegans: a platform for investigating biology.</title>
        <authorList>
            <consortium name="The C. elegans sequencing consortium"/>
        </authorList>
    </citation>
    <scope>NUCLEOTIDE SEQUENCE [LARGE SCALE GENOMIC DNA]</scope>
    <source>
        <strain>Bristol N2</strain>
    </source>
</reference>
<comment type="catalytic activity">
    <reaction>
        <text>O-phospho-L-tyrosyl-[protein] + H2O = L-tyrosyl-[protein] + phosphate</text>
        <dbReference type="Rhea" id="RHEA:10684"/>
        <dbReference type="Rhea" id="RHEA-COMP:10136"/>
        <dbReference type="Rhea" id="RHEA-COMP:20101"/>
        <dbReference type="ChEBI" id="CHEBI:15377"/>
        <dbReference type="ChEBI" id="CHEBI:43474"/>
        <dbReference type="ChEBI" id="CHEBI:46858"/>
        <dbReference type="ChEBI" id="CHEBI:61978"/>
        <dbReference type="EC" id="3.1.3.48"/>
    </reaction>
</comment>
<comment type="similarity">
    <text evidence="3">Belongs to the protein-tyrosine phosphatase family. Non-receptor class dual specificity subfamily.</text>
</comment>
<feature type="chain" id="PRO_0000094926" description="Putative tyrosine-protein phosphatase B0280.11">
    <location>
        <begin position="1"/>
        <end position="441"/>
    </location>
</feature>
<feature type="domain" description="Tyrosine-protein phosphatase" evidence="1">
    <location>
        <begin position="142"/>
        <end position="400"/>
    </location>
</feature>
<feature type="region of interest" description="Disordered" evidence="2">
    <location>
        <begin position="1"/>
        <end position="100"/>
    </location>
</feature>
<feature type="compositionally biased region" description="Basic and acidic residues" evidence="2">
    <location>
        <begin position="30"/>
        <end position="39"/>
    </location>
</feature>
<feature type="compositionally biased region" description="Polar residues" evidence="2">
    <location>
        <begin position="50"/>
        <end position="61"/>
    </location>
</feature>
<feature type="compositionally biased region" description="Basic and acidic residues" evidence="2">
    <location>
        <begin position="80"/>
        <end position="95"/>
    </location>
</feature>
<feature type="active site" description="Phosphocysteine intermediate" evidence="1">
    <location>
        <position position="337"/>
    </location>
</feature>
<evidence type="ECO:0000255" key="1">
    <source>
        <dbReference type="PROSITE-ProRule" id="PRU00160"/>
    </source>
</evidence>
<evidence type="ECO:0000256" key="2">
    <source>
        <dbReference type="SAM" id="MobiDB-lite"/>
    </source>
</evidence>
<evidence type="ECO:0000305" key="3"/>
<sequence length="441" mass="49492">MEKKKSKTNLLQKFADKFKKKKRSRSAPTSKERTSEISKRKSRSPSKSKVTTGNSHGASTDNKTKTDTNRMEVTAKGFKKAKDAKKLEKKKEETGPSKTPSTIALRRAESQMELSGNRKNVEKGVKTWVEQLEKLVEIRKLLEADFKPIDTMKVDLEKCQAFKKNIDYCQSENVELYDANRVKGGGEADFFYHATVTSIPSISTKSTILAQLPLSDSPHSLESFWLMVAAQKIQRLFILIGEDELDKAALSEYFPEDFKEFKTIRVNNRKTVSKSDEQPNTQLYYEVVPKDCAEAPFAMIEICDFWPDGKIPTVSYGRIAATAASVFDSDIDSDATCAIVSNYGAGRAGSFLVGVQAIEKLQAGDAPNIKEIAMSIRSQRPCAIETLPQYVFTYIIALTYGLKHVKDPVLKSKTEKVISQLEQFACEKMMEEDEEDNTTCE</sequence>
<name>YKCA_CAEEL</name>
<proteinExistence type="inferred from homology"/>